<accession>P19848</accession>
<name>UBIQ_COPCO</name>
<proteinExistence type="evidence at protein level"/>
<keyword id="KW-0963">Cytoplasm</keyword>
<keyword id="KW-1017">Isopeptide bond</keyword>
<keyword id="KW-0539">Nucleus</keyword>
<keyword id="KW-0832">Ubl conjugation</keyword>
<sequence>MQIFVKTLTGKTITLEVESSDTIDNVKAKIQDKEGIPPDQQRLIFAGKQLEDGRTLSDYNIQKESTLHLVLRLRGG</sequence>
<comment type="function">
    <text evidence="1">Ubiquitin exists either covalently attached to another protein, or free (unanchored). When covalently bound, it is conjugated to target proteins via an isopeptide bond either as a monomer (monoubiquitin), a polymer linked via different Lys residues of the ubiquitin (polyubiquitin chains) or a linear polymer linked via the initiator Met of the ubiquitin (linear polyubiquitin chains). Polyubiquitin chains, when attached to a target protein, have different functions depending on the Lys residue of the ubiquitin that is linked: Lys-6-linked may be involved in DNA repair; Lys-11-linked is involved in ERAD (endoplasmic reticulum-associated degradation) and in cell-cycle regulation; Lys-29-linked is involved in lysosomal degradation; Lys-33-linked is involved in kinase modification; Lys-48-linked is involved in protein degradation via the proteasome; Lys-63-linked is involved in endocytosis, and DNA-damage responses. Linear polymer chains formed via attachment by the initiator Met lead to cell signaling. Ubiquitin is usually conjugated to Lys residues of target proteins, however, in rare cases, conjugation to Cys or Ser residues has been observed. When polyubiquitin is free (unanchored-polyubiquitin), it also has distinct roles, such as in activation of protein kinases, and in signaling (By similarity).</text>
</comment>
<comment type="subcellular location">
    <subcellularLocation>
        <location evidence="1">Cytoplasm</location>
    </subcellularLocation>
    <subcellularLocation>
        <location evidence="1">Nucleus</location>
    </subcellularLocation>
</comment>
<comment type="similarity">
    <text evidence="3">Belongs to the ubiquitin family.</text>
</comment>
<organism>
    <name type="scientific">Coprinellus congregatus</name>
    <name type="common">Inky cap fungus</name>
    <name type="synonym">Coprinus congregatus</name>
    <dbReference type="NCBI Taxonomy" id="5347"/>
    <lineage>
        <taxon>Eukaryota</taxon>
        <taxon>Fungi</taxon>
        <taxon>Dikarya</taxon>
        <taxon>Basidiomycota</taxon>
        <taxon>Agaricomycotina</taxon>
        <taxon>Agaricomycetes</taxon>
        <taxon>Agaricomycetidae</taxon>
        <taxon>Agaricales</taxon>
        <taxon>Agaricineae</taxon>
        <taxon>Psathyrellaceae</taxon>
        <taxon>Coprinellus</taxon>
    </lineage>
</organism>
<dbReference type="EMBL" id="X54672">
    <property type="protein sequence ID" value="CAA38483.1"/>
    <property type="molecule type" value="mRNA"/>
</dbReference>
<dbReference type="PIR" id="S12114">
    <property type="entry name" value="S12114"/>
</dbReference>
<dbReference type="SMR" id="P19848"/>
<dbReference type="GO" id="GO:0005737">
    <property type="term" value="C:cytoplasm"/>
    <property type="evidence" value="ECO:0007669"/>
    <property type="project" value="UniProtKB-SubCell"/>
</dbReference>
<dbReference type="GO" id="GO:0005634">
    <property type="term" value="C:nucleus"/>
    <property type="evidence" value="ECO:0007669"/>
    <property type="project" value="UniProtKB-SubCell"/>
</dbReference>
<dbReference type="CDD" id="cd01803">
    <property type="entry name" value="Ubl_ubiquitin"/>
    <property type="match status" value="1"/>
</dbReference>
<dbReference type="FunFam" id="3.10.20.90:FF:000016">
    <property type="entry name" value="Polyubiquitin 3"/>
    <property type="match status" value="1"/>
</dbReference>
<dbReference type="Gene3D" id="3.10.20.90">
    <property type="entry name" value="Phosphatidylinositol 3-kinase Catalytic Subunit, Chain A, domain 1"/>
    <property type="match status" value="1"/>
</dbReference>
<dbReference type="InterPro" id="IPR000626">
    <property type="entry name" value="Ubiquitin-like_dom"/>
</dbReference>
<dbReference type="InterPro" id="IPR029071">
    <property type="entry name" value="Ubiquitin-like_domsf"/>
</dbReference>
<dbReference type="InterPro" id="IPR019954">
    <property type="entry name" value="Ubiquitin_CS"/>
</dbReference>
<dbReference type="InterPro" id="IPR019956">
    <property type="entry name" value="Ubiquitin_dom"/>
</dbReference>
<dbReference type="InterPro" id="IPR050158">
    <property type="entry name" value="Ubiquitin_ubiquitin-like"/>
</dbReference>
<dbReference type="PANTHER" id="PTHR10666">
    <property type="entry name" value="UBIQUITIN"/>
    <property type="match status" value="1"/>
</dbReference>
<dbReference type="Pfam" id="PF00240">
    <property type="entry name" value="ubiquitin"/>
    <property type="match status" value="1"/>
</dbReference>
<dbReference type="PRINTS" id="PR00348">
    <property type="entry name" value="UBIQUITIN"/>
</dbReference>
<dbReference type="SMART" id="SM00213">
    <property type="entry name" value="UBQ"/>
    <property type="match status" value="1"/>
</dbReference>
<dbReference type="SUPFAM" id="SSF54236">
    <property type="entry name" value="Ubiquitin-like"/>
    <property type="match status" value="1"/>
</dbReference>
<dbReference type="PROSITE" id="PS00299">
    <property type="entry name" value="UBIQUITIN_1"/>
    <property type="match status" value="1"/>
</dbReference>
<dbReference type="PROSITE" id="PS50053">
    <property type="entry name" value="UBIQUITIN_2"/>
    <property type="match status" value="1"/>
</dbReference>
<feature type="chain" id="PRO_0000114856" description="Ubiquitin">
    <location>
        <begin position="1"/>
        <end position="76"/>
    </location>
</feature>
<feature type="domain" description="Ubiquitin-like" evidence="2">
    <location>
        <begin position="1"/>
        <end position="76"/>
    </location>
</feature>
<feature type="cross-link" description="Glycyl lysine isopeptide (Lys-Gly) (interchain with G-Cter in ubiquitin)">
    <location>
        <position position="6"/>
    </location>
</feature>
<feature type="cross-link" description="Glycyl lysine isopeptide (Lys-Gly) (interchain with G-Cter in ubiquitin)">
    <location>
        <position position="11"/>
    </location>
</feature>
<feature type="cross-link" description="Glycyl lysine isopeptide (Lys-Gly) (interchain with G-Cter in ubiquitin)">
    <location>
        <position position="27"/>
    </location>
</feature>
<feature type="cross-link" description="Glycyl lysine isopeptide (Lys-Gly) (interchain with G-Cter in ubiquitin)">
    <location>
        <position position="29"/>
    </location>
</feature>
<feature type="cross-link" description="Glycyl lysine isopeptide (Lys-Gly) (interchain with G-Cter in ubiquitin)">
    <location>
        <position position="33"/>
    </location>
</feature>
<feature type="cross-link" description="Glycyl lysine isopeptide (Lys-Gly) (interchain with G-Cter in ubiquitin)" evidence="1">
    <location>
        <position position="48"/>
    </location>
</feature>
<feature type="cross-link" description="Glycyl lysine isopeptide (Lys-Gly) (interchain with G-Cter in ubiquitin)">
    <location>
        <position position="63"/>
    </location>
</feature>
<feature type="cross-link" description="Glycyl lysine isopeptide (Gly-Lys) (interchain with K-? in acceptor proteins)" evidence="2">
    <location>
        <position position="76"/>
    </location>
</feature>
<protein>
    <recommendedName>
        <fullName>Ubiquitin</fullName>
    </recommendedName>
</protein>
<reference key="1">
    <citation type="journal article" date="1990" name="Nucleic Acids Res.">
        <title>A novel form of ubiquitin found in the basidiomycete fungus, Coprinus congregatus.</title>
        <authorList>
            <person name="Foster L.M."/>
            <person name="Loftus M.G."/>
            <person name="Ross I.K."/>
        </authorList>
    </citation>
    <scope>NUCLEOTIDE SEQUENCE [MRNA]</scope>
    <source>
        <strain>California</strain>
    </source>
</reference>
<evidence type="ECO:0000250" key="1"/>
<evidence type="ECO:0000255" key="2">
    <source>
        <dbReference type="PROSITE-ProRule" id="PRU00214"/>
    </source>
</evidence>
<evidence type="ECO:0000305" key="3"/>